<dbReference type="EMBL" id="U28927">
    <property type="protein sequence ID" value="AAC52867.1"/>
    <property type="status" value="ALT_INIT"/>
    <property type="molecule type" value="mRNA"/>
</dbReference>
<dbReference type="RefSeq" id="NP_059031.1">
    <property type="nucleotide sequence ID" value="NM_017335.1"/>
</dbReference>
<dbReference type="SMR" id="P48056"/>
<dbReference type="FunCoup" id="P48056">
    <property type="interactions" value="5"/>
</dbReference>
<dbReference type="STRING" id="10116.ENSRNOP00000018821"/>
<dbReference type="BindingDB" id="P48056"/>
<dbReference type="ChEMBL" id="CHEMBL2111478"/>
<dbReference type="GlyCosmos" id="P48056">
    <property type="glycosylation" value="2 sites, No reported glycans"/>
</dbReference>
<dbReference type="GlyGen" id="P48056">
    <property type="glycosylation" value="2 sites"/>
</dbReference>
<dbReference type="iPTMnet" id="P48056"/>
<dbReference type="PhosphoSitePlus" id="P48056"/>
<dbReference type="PaxDb" id="10116-ENSRNOP00000018821"/>
<dbReference type="GeneID" id="50676"/>
<dbReference type="KEGG" id="rno:50676"/>
<dbReference type="UCSC" id="RGD:620255">
    <property type="organism name" value="rat"/>
</dbReference>
<dbReference type="AGR" id="RGD:620255"/>
<dbReference type="CTD" id="6539"/>
<dbReference type="RGD" id="620255">
    <property type="gene designation" value="Slc6a12"/>
</dbReference>
<dbReference type="eggNOG" id="KOG3660">
    <property type="taxonomic scope" value="Eukaryota"/>
</dbReference>
<dbReference type="HOGENOM" id="CLU_006855_9_5_1"/>
<dbReference type="InParanoid" id="P48056"/>
<dbReference type="OrthoDB" id="6581954at2759"/>
<dbReference type="PhylomeDB" id="P48056"/>
<dbReference type="TreeFam" id="TF343812"/>
<dbReference type="Reactome" id="R-RNO-352230">
    <property type="pathway name" value="Amino acid transport across the plasma membrane"/>
</dbReference>
<dbReference type="Reactome" id="R-RNO-442660">
    <property type="pathway name" value="Na+/Cl- dependent neurotransmitter transporters"/>
</dbReference>
<dbReference type="Reactome" id="R-RNO-71288">
    <property type="pathway name" value="Creatine metabolism"/>
</dbReference>
<dbReference type="Reactome" id="R-RNO-888593">
    <property type="pathway name" value="Reuptake of GABA"/>
</dbReference>
<dbReference type="PRO" id="PR:P48056"/>
<dbReference type="Proteomes" id="UP000002494">
    <property type="component" value="Chromosome 4"/>
</dbReference>
<dbReference type="Bgee" id="ENSRNOG00000013547">
    <property type="expression patterns" value="Expressed in liver and 10 other cell types or tissues"/>
</dbReference>
<dbReference type="ExpressionAtlas" id="P48056">
    <property type="expression patterns" value="baseline and differential"/>
</dbReference>
<dbReference type="GO" id="GO:0016323">
    <property type="term" value="C:basolateral plasma membrane"/>
    <property type="evidence" value="ECO:0000250"/>
    <property type="project" value="UniProtKB"/>
</dbReference>
<dbReference type="GO" id="GO:0042995">
    <property type="term" value="C:cell projection"/>
    <property type="evidence" value="ECO:0000318"/>
    <property type="project" value="GO_Central"/>
</dbReference>
<dbReference type="GO" id="GO:0005886">
    <property type="term" value="C:plasma membrane"/>
    <property type="evidence" value="ECO:0000250"/>
    <property type="project" value="UniProtKB"/>
</dbReference>
<dbReference type="GO" id="GO:0005332">
    <property type="term" value="F:gamma-aminobutyric acid:sodium:chloride symporter activity"/>
    <property type="evidence" value="ECO:0000250"/>
    <property type="project" value="UniProtKB"/>
</dbReference>
<dbReference type="GO" id="GO:0008028">
    <property type="term" value="F:monocarboxylic acid transmembrane transporter activity"/>
    <property type="evidence" value="ECO:0000266"/>
    <property type="project" value="RGD"/>
</dbReference>
<dbReference type="GO" id="GO:0006865">
    <property type="term" value="P:amino acid transport"/>
    <property type="evidence" value="ECO:0000318"/>
    <property type="project" value="GO_Central"/>
</dbReference>
<dbReference type="GO" id="GO:0071474">
    <property type="term" value="P:cellular hyperosmotic response"/>
    <property type="evidence" value="ECO:0000270"/>
    <property type="project" value="RGD"/>
</dbReference>
<dbReference type="GO" id="GO:0015812">
    <property type="term" value="P:gamma-aminobutyric acid transport"/>
    <property type="evidence" value="ECO:0000250"/>
    <property type="project" value="UniProtKB"/>
</dbReference>
<dbReference type="GO" id="GO:0031460">
    <property type="term" value="P:glycine betaine transport"/>
    <property type="evidence" value="ECO:0000250"/>
    <property type="project" value="UniProtKB"/>
</dbReference>
<dbReference type="GO" id="GO:0009992">
    <property type="term" value="P:intracellular water homeostasis"/>
    <property type="evidence" value="ECO:0000314"/>
    <property type="project" value="RGD"/>
</dbReference>
<dbReference type="GO" id="GO:0015718">
    <property type="term" value="P:monocarboxylic acid transport"/>
    <property type="evidence" value="ECO:0000266"/>
    <property type="project" value="RGD"/>
</dbReference>
<dbReference type="GO" id="GO:0006836">
    <property type="term" value="P:neurotransmitter transport"/>
    <property type="evidence" value="ECO:0000304"/>
    <property type="project" value="RGD"/>
</dbReference>
<dbReference type="GO" id="GO:1904373">
    <property type="term" value="P:response to kainic acid"/>
    <property type="evidence" value="ECO:0000270"/>
    <property type="project" value="RGD"/>
</dbReference>
<dbReference type="GO" id="GO:0035725">
    <property type="term" value="P:sodium ion transmembrane transport"/>
    <property type="evidence" value="ECO:0000318"/>
    <property type="project" value="GO_Central"/>
</dbReference>
<dbReference type="InterPro" id="IPR000175">
    <property type="entry name" value="Na/ntran_symport"/>
</dbReference>
<dbReference type="InterPro" id="IPR002983">
    <property type="entry name" value="Na/ntran_symport_betaine"/>
</dbReference>
<dbReference type="InterPro" id="IPR037272">
    <property type="entry name" value="SNS_sf"/>
</dbReference>
<dbReference type="PANTHER" id="PTHR11616:SF118">
    <property type="entry name" value="SODIUM- AND CHLORIDE-DEPENDENT BETAINE TRANSPORTER"/>
    <property type="match status" value="1"/>
</dbReference>
<dbReference type="PANTHER" id="PTHR11616">
    <property type="entry name" value="SODIUM/CHLORIDE DEPENDENT TRANSPORTER"/>
    <property type="match status" value="1"/>
</dbReference>
<dbReference type="Pfam" id="PF00209">
    <property type="entry name" value="SNF"/>
    <property type="match status" value="1"/>
</dbReference>
<dbReference type="PRINTS" id="PR01198">
    <property type="entry name" value="BETTRANSPORT"/>
</dbReference>
<dbReference type="PRINTS" id="PR00176">
    <property type="entry name" value="NANEUSMPORT"/>
</dbReference>
<dbReference type="SUPFAM" id="SSF161070">
    <property type="entry name" value="SNF-like"/>
    <property type="match status" value="1"/>
</dbReference>
<dbReference type="PROSITE" id="PS00610">
    <property type="entry name" value="NA_NEUROTRAN_SYMP_1"/>
    <property type="match status" value="1"/>
</dbReference>
<dbReference type="PROSITE" id="PS00754">
    <property type="entry name" value="NA_NEUROTRAN_SYMP_2"/>
    <property type="match status" value="1"/>
</dbReference>
<dbReference type="PROSITE" id="PS50267">
    <property type="entry name" value="NA_NEUROTRAN_SYMP_3"/>
    <property type="match status" value="1"/>
</dbReference>
<comment type="function">
    <text evidence="3 4">Transporter that mediates cellular uptake of betaine and GABA in a sodium- and chloride-dependent process. May have a role in regulation of GABAergic transmission in the brain through the reuptake of GABA into presynaptic terminals, as well as in osmotic regulation (By similarity). Probably also involved in renal and hepatic osmotic regulation (By similarity).</text>
</comment>
<comment type="catalytic activity">
    <reaction evidence="4">
        <text>4-aminobutanoate(out) + chloride(out) + 3 Na(+)(out) = 4-aminobutanoate(in) + chloride(in) + 3 Na(+)(in)</text>
        <dbReference type="Rhea" id="RHEA:70731"/>
        <dbReference type="ChEBI" id="CHEBI:17996"/>
        <dbReference type="ChEBI" id="CHEBI:29101"/>
        <dbReference type="ChEBI" id="CHEBI:59888"/>
    </reaction>
    <physiologicalReaction direction="left-to-right" evidence="4">
        <dbReference type="Rhea" id="RHEA:70732"/>
    </physiologicalReaction>
</comment>
<comment type="catalytic activity">
    <reaction evidence="2">
        <text>glycine betaine(out) + 2 chloride(out) + 3 Na(+)(out) = glycine betaine(in) + 2 chloride(in) + 3 Na(+)(in)</text>
        <dbReference type="Rhea" id="RHEA:71175"/>
        <dbReference type="ChEBI" id="CHEBI:17750"/>
        <dbReference type="ChEBI" id="CHEBI:17996"/>
        <dbReference type="ChEBI" id="CHEBI:29101"/>
    </reaction>
    <physiologicalReaction direction="left-to-right" evidence="2">
        <dbReference type="Rhea" id="RHEA:71176"/>
    </physiologicalReaction>
</comment>
<comment type="subunit">
    <text evidence="1">Interacts with LIN7C.</text>
</comment>
<comment type="subcellular location">
    <subcellularLocation>
        <location evidence="3">Basolateral cell membrane</location>
        <topology evidence="5">Multi-pass membrane protein</topology>
    </subcellularLocation>
    <subcellularLocation>
        <location evidence="3">Cell membrane</location>
        <topology evidence="5">Multi-pass membrane protein</topology>
    </subcellularLocation>
    <text evidence="3">In kidney, locates in basolateral membranes of renal medulla. In liver, locates in hepatocytes cell membrane.</text>
</comment>
<comment type="similarity">
    <text evidence="7">Belongs to the sodium:neurotransmitter symporter (SNF) (TC 2.A.22) family. SLC6A12 subfamily.</text>
</comment>
<comment type="sequence caution" evidence="7">
    <conflict type="erroneous initiation">
        <sequence resource="EMBL-CDS" id="AAC52867"/>
    </conflict>
    <text>Extended N-terminus.</text>
</comment>
<organism>
    <name type="scientific">Rattus norvegicus</name>
    <name type="common">Rat</name>
    <dbReference type="NCBI Taxonomy" id="10116"/>
    <lineage>
        <taxon>Eukaryota</taxon>
        <taxon>Metazoa</taxon>
        <taxon>Chordata</taxon>
        <taxon>Craniata</taxon>
        <taxon>Vertebrata</taxon>
        <taxon>Euteleostomi</taxon>
        <taxon>Mammalia</taxon>
        <taxon>Eutheria</taxon>
        <taxon>Euarchontoglires</taxon>
        <taxon>Glires</taxon>
        <taxon>Rodentia</taxon>
        <taxon>Myomorpha</taxon>
        <taxon>Muroidea</taxon>
        <taxon>Muridae</taxon>
        <taxon>Murinae</taxon>
        <taxon>Rattus</taxon>
    </lineage>
</organism>
<gene>
    <name type="primary">Slc6a12</name>
</gene>
<name>S6A12_RAT</name>
<keyword id="KW-1003">Cell membrane</keyword>
<keyword id="KW-0325">Glycoprotein</keyword>
<keyword id="KW-0472">Membrane</keyword>
<keyword id="KW-0532">Neurotransmitter transport</keyword>
<keyword id="KW-0597">Phosphoprotein</keyword>
<keyword id="KW-1185">Reference proteome</keyword>
<keyword id="KW-0769">Symport</keyword>
<keyword id="KW-0812">Transmembrane</keyword>
<keyword id="KW-1133">Transmembrane helix</keyword>
<keyword id="KW-0813">Transport</keyword>
<feature type="chain" id="PRO_0000214791" description="Sodium- and chloride-dependent betaine transporter">
    <location>
        <begin position="1"/>
        <end position="614"/>
    </location>
</feature>
<feature type="topological domain" description="Cytoplasmic" evidence="5">
    <location>
        <begin position="1"/>
        <end position="44"/>
    </location>
</feature>
<feature type="transmembrane region" description="Helical; Name=1" evidence="5">
    <location>
        <begin position="45"/>
        <end position="65"/>
    </location>
</feature>
<feature type="transmembrane region" description="Helical; Name=2" evidence="5">
    <location>
        <begin position="73"/>
        <end position="92"/>
    </location>
</feature>
<feature type="transmembrane region" description="Helical; Name=3" evidence="5">
    <location>
        <begin position="117"/>
        <end position="137"/>
    </location>
</feature>
<feature type="topological domain" description="Extracellular" evidence="5">
    <location>
        <begin position="138"/>
        <end position="210"/>
    </location>
</feature>
<feature type="transmembrane region" description="Helical; Name=4" evidence="5">
    <location>
        <begin position="211"/>
        <end position="229"/>
    </location>
</feature>
<feature type="transmembrane region" description="Helical; Name=5" evidence="5">
    <location>
        <begin position="238"/>
        <end position="255"/>
    </location>
</feature>
<feature type="transmembrane region" description="Helical; Name=6" evidence="5">
    <location>
        <begin position="291"/>
        <end position="308"/>
    </location>
</feature>
<feature type="transmembrane region" description="Helical; Name=7" evidence="5">
    <location>
        <begin position="320"/>
        <end position="341"/>
    </location>
</feature>
<feature type="transmembrane region" description="Helical; Name=8" evidence="5">
    <location>
        <begin position="374"/>
        <end position="393"/>
    </location>
</feature>
<feature type="transmembrane region" description="Helical; Name=9" evidence="5">
    <location>
        <begin position="423"/>
        <end position="441"/>
    </location>
</feature>
<feature type="transmembrane region" description="Helical; Name=10" evidence="5">
    <location>
        <begin position="458"/>
        <end position="478"/>
    </location>
</feature>
<feature type="transmembrane region" description="Helical; Name=11" evidence="5">
    <location>
        <begin position="499"/>
        <end position="518"/>
    </location>
</feature>
<feature type="transmembrane region" description="Helical; Name=12" evidence="5">
    <location>
        <begin position="538"/>
        <end position="556"/>
    </location>
</feature>
<feature type="topological domain" description="Cytoplasmic" evidence="5">
    <location>
        <begin position="557"/>
        <end position="614"/>
    </location>
</feature>
<feature type="region of interest" description="Disordered" evidence="6">
    <location>
        <begin position="574"/>
        <end position="600"/>
    </location>
</feature>
<feature type="compositionally biased region" description="Polar residues" evidence="6">
    <location>
        <begin position="588"/>
        <end position="600"/>
    </location>
</feature>
<feature type="modified residue" description="Phosphoserine" evidence="8">
    <location>
        <position position="586"/>
    </location>
</feature>
<feature type="glycosylation site" description="N-linked (GlcNAc...) asparagine" evidence="5">
    <location>
        <position position="171"/>
    </location>
</feature>
<feature type="glycosylation site" description="N-linked (GlcNAc...) asparagine" evidence="5">
    <location>
        <position position="183"/>
    </location>
</feature>
<sequence length="614" mass="69749">MDRKVTVHEDGCPVVSWVPEEGEMMDQKDKDQVKDRGQWTNKMEFVLSVAGEIIGLGNVWRFPYLCYKNGGGAFFIPYFIFFFSCGIPVFFLEVALGQYSSQGSVTAWRKICPLLQGIGMASVVIESYLNIYYIIILAWALFYLFSSFTWELPWTTCTNSWNTEHCVDFLNYSSTRAASYSENFTSPVMEFWERRVLGITSGIHDLGSLRWELALCLLLAWIICYFCIWKGVKSTGKVVYFTATFPYLMLIILLIRGVTLPGAYQGIVFYLKPDLLRLKDPQVWMDAGTQIFFSFAICQGCLTALGSYNKYHNNCYRDSIALCFLNSATSFVAGFVVFSILGFMAQEQGVPISEVAESGPGLAFIAFPKAVTMMPLSQLWSCLFFLMLLFLGLDSQFVCMECLVTASMDMFPQQLRKRGRRELLILAVAIVCYLMGLLLVTEGGMYIFQLFDYYASSGICLLFLSLFEVICIGWVYGADRFYDNVEDMIGYRPWPLVKISWLFLTPGLCLATFFFSLSKYTPLKYNNVYIYPSWGYSIGWLLAFSSMACVPLFIIITLLKTQGSFKKRLQRLITPDPSLPQPGRRSPQDGSSAQNCSTSPVKQELIAWEKETHL</sequence>
<protein>
    <recommendedName>
        <fullName>Sodium- and chloride-dependent betaine transporter</fullName>
    </recommendedName>
    <alternativeName>
        <fullName>Na(+)/Cl(-) betaine/GABA transporter</fullName>
    </alternativeName>
    <alternativeName>
        <fullName>Solute carrier family 6 member 12</fullName>
    </alternativeName>
</protein>
<reference key="1">
    <citation type="journal article" date="1996" name="Biochim. Biophys. Acta">
        <title>A liver-specific isoform of the betaine/GABA transporter in the rat: cDNA sequence and organ distribution.</title>
        <authorList>
            <person name="Burnham C.E."/>
            <person name="Buerk B."/>
            <person name="Schmidt C."/>
            <person name="Bucuvalas J.C."/>
        </authorList>
    </citation>
    <scope>NUCLEOTIDE SEQUENCE [MRNA]</scope>
    <source>
        <strain>Sprague-Dawley</strain>
        <tissue>Liver</tissue>
    </source>
</reference>
<reference key="2">
    <citation type="journal article" date="2012" name="Nat. Commun.">
        <title>Quantitative maps of protein phosphorylation sites across 14 different rat organs and tissues.</title>
        <authorList>
            <person name="Lundby A."/>
            <person name="Secher A."/>
            <person name="Lage K."/>
            <person name="Nordsborg N.B."/>
            <person name="Dmytriyev A."/>
            <person name="Lundby C."/>
            <person name="Olsen J.V."/>
        </authorList>
    </citation>
    <scope>PHOSPHORYLATION [LARGE SCALE ANALYSIS] AT SER-586</scope>
    <scope>IDENTIFICATION BY MASS SPECTROMETRY [LARGE SCALE ANALYSIS]</scope>
</reference>
<proteinExistence type="evidence at protein level"/>
<accession>P48056</accession>
<evidence type="ECO:0000250" key="1"/>
<evidence type="ECO:0000250" key="2">
    <source>
        <dbReference type="UniProtKB" id="P27799"/>
    </source>
</evidence>
<evidence type="ECO:0000250" key="3">
    <source>
        <dbReference type="UniProtKB" id="P31651"/>
    </source>
</evidence>
<evidence type="ECO:0000250" key="4">
    <source>
        <dbReference type="UniProtKB" id="P48065"/>
    </source>
</evidence>
<evidence type="ECO:0000255" key="5"/>
<evidence type="ECO:0000256" key="6">
    <source>
        <dbReference type="SAM" id="MobiDB-lite"/>
    </source>
</evidence>
<evidence type="ECO:0000305" key="7"/>
<evidence type="ECO:0007744" key="8">
    <source>
    </source>
</evidence>